<dbReference type="EMBL" id="CH408030">
    <property type="protein sequence ID" value="EAQ90489.1"/>
    <property type="molecule type" value="Genomic_DNA"/>
</dbReference>
<dbReference type="RefSeq" id="XP_001228940.1">
    <property type="nucleotide sequence ID" value="XM_001228939.1"/>
</dbReference>
<dbReference type="SMR" id="Q2HBI0"/>
<dbReference type="FunCoup" id="Q2HBI0">
    <property type="interactions" value="37"/>
</dbReference>
<dbReference type="STRING" id="306901.Q2HBI0"/>
<dbReference type="GeneID" id="4389167"/>
<dbReference type="VEuPathDB" id="FungiDB:CHGG_02424"/>
<dbReference type="eggNOG" id="KOG1974">
    <property type="taxonomic scope" value="Eukaryota"/>
</dbReference>
<dbReference type="HOGENOM" id="CLU_004390_0_0_1"/>
<dbReference type="InParanoid" id="Q2HBI0"/>
<dbReference type="OMA" id="VNHHRHT"/>
<dbReference type="OrthoDB" id="310853at2759"/>
<dbReference type="Proteomes" id="UP000001056">
    <property type="component" value="Unassembled WGS sequence"/>
</dbReference>
<dbReference type="GO" id="GO:0031298">
    <property type="term" value="C:replication fork protection complex"/>
    <property type="evidence" value="ECO:0007669"/>
    <property type="project" value="TreeGrafter"/>
</dbReference>
<dbReference type="GO" id="GO:0003677">
    <property type="term" value="F:DNA binding"/>
    <property type="evidence" value="ECO:0007669"/>
    <property type="project" value="TreeGrafter"/>
</dbReference>
<dbReference type="GO" id="GO:0006281">
    <property type="term" value="P:DNA repair"/>
    <property type="evidence" value="ECO:0007669"/>
    <property type="project" value="UniProtKB-KW"/>
</dbReference>
<dbReference type="GO" id="GO:0000076">
    <property type="term" value="P:DNA replication checkpoint signaling"/>
    <property type="evidence" value="ECO:0007669"/>
    <property type="project" value="TreeGrafter"/>
</dbReference>
<dbReference type="GO" id="GO:0051321">
    <property type="term" value="P:meiotic cell cycle"/>
    <property type="evidence" value="ECO:0007669"/>
    <property type="project" value="UniProtKB-KW"/>
</dbReference>
<dbReference type="GO" id="GO:0043111">
    <property type="term" value="P:replication fork arrest"/>
    <property type="evidence" value="ECO:0007669"/>
    <property type="project" value="TreeGrafter"/>
</dbReference>
<dbReference type="InterPro" id="IPR044998">
    <property type="entry name" value="Timeless"/>
</dbReference>
<dbReference type="InterPro" id="IPR006906">
    <property type="entry name" value="Timeless_N"/>
</dbReference>
<dbReference type="PANTHER" id="PTHR22940:SF4">
    <property type="entry name" value="PROTEIN TIMELESS HOMOLOG"/>
    <property type="match status" value="1"/>
</dbReference>
<dbReference type="PANTHER" id="PTHR22940">
    <property type="entry name" value="TIMEOUT/TIMELESS-2"/>
    <property type="match status" value="1"/>
</dbReference>
<dbReference type="Pfam" id="PF04821">
    <property type="entry name" value="TIMELESS"/>
    <property type="match status" value="1"/>
</dbReference>
<feature type="chain" id="PRO_0000301735" description="Topoisomerase 1-associated factor 1">
    <location>
        <begin position="1"/>
        <end position="1251"/>
    </location>
</feature>
<feature type="region of interest" description="Disordered" evidence="2">
    <location>
        <begin position="328"/>
        <end position="354"/>
    </location>
</feature>
<feature type="region of interest" description="Disordered" evidence="2">
    <location>
        <begin position="564"/>
        <end position="601"/>
    </location>
</feature>
<feature type="region of interest" description="Disordered" evidence="2">
    <location>
        <begin position="901"/>
        <end position="1021"/>
    </location>
</feature>
<feature type="region of interest" description="Disordered" evidence="2">
    <location>
        <begin position="1041"/>
        <end position="1251"/>
    </location>
</feature>
<feature type="compositionally biased region" description="Basic and acidic residues" evidence="2">
    <location>
        <begin position="344"/>
        <end position="354"/>
    </location>
</feature>
<feature type="compositionally biased region" description="Acidic residues" evidence="2">
    <location>
        <begin position="576"/>
        <end position="591"/>
    </location>
</feature>
<feature type="compositionally biased region" description="Basic and acidic residues" evidence="2">
    <location>
        <begin position="592"/>
        <end position="601"/>
    </location>
</feature>
<feature type="compositionally biased region" description="Basic and acidic residues" evidence="2">
    <location>
        <begin position="985"/>
        <end position="1011"/>
    </location>
</feature>
<feature type="compositionally biased region" description="Acidic residues" evidence="2">
    <location>
        <begin position="1069"/>
        <end position="1079"/>
    </location>
</feature>
<feature type="compositionally biased region" description="Acidic residues" evidence="2">
    <location>
        <begin position="1103"/>
        <end position="1122"/>
    </location>
</feature>
<feature type="compositionally biased region" description="Low complexity" evidence="2">
    <location>
        <begin position="1123"/>
        <end position="1136"/>
    </location>
</feature>
<feature type="compositionally biased region" description="Basic residues" evidence="2">
    <location>
        <begin position="1137"/>
        <end position="1151"/>
    </location>
</feature>
<feature type="compositionally biased region" description="Acidic residues" evidence="2">
    <location>
        <begin position="1157"/>
        <end position="1179"/>
    </location>
</feature>
<feature type="compositionally biased region" description="Polar residues" evidence="2">
    <location>
        <begin position="1182"/>
        <end position="1205"/>
    </location>
</feature>
<accession>Q2HBI0</accession>
<proteinExistence type="inferred from homology"/>
<gene>
    <name type="primary">TOF1</name>
    <name type="ORF">CHGG_02424</name>
</gene>
<evidence type="ECO:0000250" key="1"/>
<evidence type="ECO:0000256" key="2">
    <source>
        <dbReference type="SAM" id="MobiDB-lite"/>
    </source>
</evidence>
<evidence type="ECO:0000305" key="3"/>
<protein>
    <recommendedName>
        <fullName>Topoisomerase 1-associated factor 1</fullName>
    </recommendedName>
</protein>
<sequence>MEDVGVNNDTVHPEARAYITSLVSALGGYGVDDDGGYTLGDDALEVLRDLKRWVRFYDERTNRMDVARCLAESNLVTSDLLQIMAKWVSNESSSKYMERIAFACLEIMVPLTWPIERDSETMTVNHHRHLPVLQLAQLGYKRAIINFDVAPILSTAVRIALPCMAIPNGDRSSRDQATIKLILYFLRNIAMIAPPPGLKYEGDETQVSRSTLIDAFTFQDIFLTILTIASNMGEDFRTEDVIILDIIFHIVKRVDSSKLFVSEKRLHKIKEDELTAAMRKEAAMLKSYNKNAPTRHSRFGTMIWVKRESGKLATVSGQDALLDAATRERKMDSNKSFKPPRRARKEDMEPKDLGPRVSLDERARRQLQSFVSEFLDSGFNPLFSHVRRSLDREAPHVLQSHHSQFFYLVAWFLEAERMRKKAAKDSKNQTSTGEDVGSFNLVAEVLNQEMFITMSRTLDRAYGDKDWRLLTTVMRCFTQILLTIQEMASSGNEENEEIADNILSRLFYEETTHDLIANIVRTYKDQGFEYLDACTELTHTFVRILEAYSKENVDLQVRSRKRTRRKKKAAKAAGDQGDDEGQGDAEDDSADDERQAEKTSQERKFDFKRFALRFAPQGVVDTFVTFTKYYRDLDDSQLKRAHRYFFKLAFKQDMSVMLFRLDIIHLFYNMIKGPEPLDKSSSMYKEWEDLAMQTIRKCVKKLEERPALFTELLFSKITSTAHYLEYGHEKQTISNPRPAAELEFKREVEREQQIAILVGVLIDRSQTDHLGWIKKQLSDAESERRAWENAERALAAERPDDEVMAGSAEAIAAKTPDHVTMRPDTDARRTAMFKNPHLRLLMKLVGLERLAPTLDETPDAIWIIPGTLTADALKETISLINKAEFTPPIFDDGELAEDQLRRKTAPRKRAAYDDDDNLDGINDLINDGSDDDGDDGTGILFPAGGPTARKRTAQDEPPKKRLQRRRRRGGSDDPDADTAETDAQAEARARARRKKELEKARKIKSEMYVDPREDDSDYEGNKERDRLFFAREEERQAVKDATFGLSSRPEGVGEGAWEALVGAVMGGGDGDDGEGEDAVVGERPPKVGGRKRKSGVADLAESGGEDSEEGDEDDESRSEEDGSAVSEAEAPAAAGRRPNKRRKPAQKKKKRVVDISSGEDDDVGMDMDVDVDADADADAMDFTQSSKDGAVTNDTPLSSDPSRTTKPGGAEGSGDKGGGEDEDEDMPVAKPVARARPRARAGFIVESSDEE</sequence>
<comment type="function">
    <text evidence="1">Forms a fork protection complex (FPC) with CSM3 and which is required for chromosome segregation during meiosis and DNA damage repair. FPC coordinates leading and lagging strand synthesis and moves with the replication fork. FPC stabilizes replication forks in a configuration that is recognized by replication checkpoint sensors (By similarity).</text>
</comment>
<comment type="subunit">
    <text evidence="1">Component of the fork protection complex (FPC) consisting of TOF1 and CSM3.</text>
</comment>
<comment type="subcellular location">
    <subcellularLocation>
        <location evidence="1">Nucleus</location>
    </subcellularLocation>
</comment>
<comment type="similarity">
    <text evidence="3">Belongs to the timeless family.</text>
</comment>
<keyword id="KW-0131">Cell cycle</keyword>
<keyword id="KW-0227">DNA damage</keyword>
<keyword id="KW-0234">DNA repair</keyword>
<keyword id="KW-0236">DNA replication inhibitor</keyword>
<keyword id="KW-0469">Meiosis</keyword>
<keyword id="KW-0539">Nucleus</keyword>
<keyword id="KW-1185">Reference proteome</keyword>
<name>TOF1_CHAGB</name>
<organism>
    <name type="scientific">Chaetomium globosum (strain ATCC 6205 / CBS 148.51 / DSM 1962 / NBRC 6347 / NRRL 1970)</name>
    <name type="common">Soil fungus</name>
    <dbReference type="NCBI Taxonomy" id="306901"/>
    <lineage>
        <taxon>Eukaryota</taxon>
        <taxon>Fungi</taxon>
        <taxon>Dikarya</taxon>
        <taxon>Ascomycota</taxon>
        <taxon>Pezizomycotina</taxon>
        <taxon>Sordariomycetes</taxon>
        <taxon>Sordariomycetidae</taxon>
        <taxon>Sordariales</taxon>
        <taxon>Chaetomiaceae</taxon>
        <taxon>Chaetomium</taxon>
    </lineage>
</organism>
<reference key="1">
    <citation type="journal article" date="2015" name="Genome Announc.">
        <title>Draft genome sequence of the cellulolytic fungus Chaetomium globosum.</title>
        <authorList>
            <person name="Cuomo C.A."/>
            <person name="Untereiner W.A."/>
            <person name="Ma L.-J."/>
            <person name="Grabherr M."/>
            <person name="Birren B.W."/>
        </authorList>
    </citation>
    <scope>NUCLEOTIDE SEQUENCE [LARGE SCALE GENOMIC DNA]</scope>
    <source>
        <strain>ATCC 6205 / CBS 148.51 / DSM 1962 / NBRC 6347 / NRRL 1970</strain>
    </source>
</reference>